<protein>
    <recommendedName>
        <fullName evidence="1">Large ribosomal subunit protein bL34</fullName>
    </recommendedName>
    <alternativeName>
        <fullName evidence="3">50S ribosomal protein L34</fullName>
    </alternativeName>
</protein>
<sequence>MTKRTFGGTSRKRKRVSGFRVRMRSHTGRRVIKSRRQKGRERIAV</sequence>
<feature type="chain" id="PRO_1000013398" description="Large ribosomal subunit protein bL34">
    <location>
        <begin position="1"/>
        <end position="45"/>
    </location>
</feature>
<feature type="region of interest" description="Disordered" evidence="2">
    <location>
        <begin position="1"/>
        <end position="45"/>
    </location>
</feature>
<feature type="compositionally biased region" description="Basic residues" evidence="2">
    <location>
        <begin position="10"/>
        <end position="39"/>
    </location>
</feature>
<evidence type="ECO:0000255" key="1">
    <source>
        <dbReference type="HAMAP-Rule" id="MF_00391"/>
    </source>
</evidence>
<evidence type="ECO:0000256" key="2">
    <source>
        <dbReference type="SAM" id="MobiDB-lite"/>
    </source>
</evidence>
<evidence type="ECO:0000305" key="3"/>
<accession>A3PE32</accession>
<gene>
    <name evidence="1" type="primary">rpmH</name>
    <name evidence="1" type="synonym">rpl34</name>
    <name type="ordered locus">P9301_13841</name>
</gene>
<reference key="1">
    <citation type="journal article" date="2007" name="PLoS Genet.">
        <title>Patterns and implications of gene gain and loss in the evolution of Prochlorococcus.</title>
        <authorList>
            <person name="Kettler G.C."/>
            <person name="Martiny A.C."/>
            <person name="Huang K."/>
            <person name="Zucker J."/>
            <person name="Coleman M.L."/>
            <person name="Rodrigue S."/>
            <person name="Chen F."/>
            <person name="Lapidus A."/>
            <person name="Ferriera S."/>
            <person name="Johnson J."/>
            <person name="Steglich C."/>
            <person name="Church G.M."/>
            <person name="Richardson P."/>
            <person name="Chisholm S.W."/>
        </authorList>
    </citation>
    <scope>NUCLEOTIDE SEQUENCE [LARGE SCALE GENOMIC DNA]</scope>
    <source>
        <strain>MIT 9301</strain>
    </source>
</reference>
<organism>
    <name type="scientific">Prochlorococcus marinus (strain MIT 9301)</name>
    <dbReference type="NCBI Taxonomy" id="167546"/>
    <lineage>
        <taxon>Bacteria</taxon>
        <taxon>Bacillati</taxon>
        <taxon>Cyanobacteriota</taxon>
        <taxon>Cyanophyceae</taxon>
        <taxon>Synechococcales</taxon>
        <taxon>Prochlorococcaceae</taxon>
        <taxon>Prochlorococcus</taxon>
    </lineage>
</organism>
<dbReference type="EMBL" id="CP000576">
    <property type="protein sequence ID" value="ABO18007.1"/>
    <property type="molecule type" value="Genomic_DNA"/>
</dbReference>
<dbReference type="RefSeq" id="WP_002808184.1">
    <property type="nucleotide sequence ID" value="NC_009091.1"/>
</dbReference>
<dbReference type="SMR" id="A3PE32"/>
<dbReference type="STRING" id="167546.P9301_13841"/>
<dbReference type="KEGG" id="pmg:P9301_13841"/>
<dbReference type="eggNOG" id="COG0230">
    <property type="taxonomic scope" value="Bacteria"/>
</dbReference>
<dbReference type="HOGENOM" id="CLU_129938_2_1_3"/>
<dbReference type="OrthoDB" id="9804164at2"/>
<dbReference type="Proteomes" id="UP000001430">
    <property type="component" value="Chromosome"/>
</dbReference>
<dbReference type="GO" id="GO:1990904">
    <property type="term" value="C:ribonucleoprotein complex"/>
    <property type="evidence" value="ECO:0007669"/>
    <property type="project" value="UniProtKB-KW"/>
</dbReference>
<dbReference type="GO" id="GO:0005840">
    <property type="term" value="C:ribosome"/>
    <property type="evidence" value="ECO:0007669"/>
    <property type="project" value="UniProtKB-KW"/>
</dbReference>
<dbReference type="GO" id="GO:0003735">
    <property type="term" value="F:structural constituent of ribosome"/>
    <property type="evidence" value="ECO:0007669"/>
    <property type="project" value="InterPro"/>
</dbReference>
<dbReference type="GO" id="GO:0006412">
    <property type="term" value="P:translation"/>
    <property type="evidence" value="ECO:0007669"/>
    <property type="project" value="UniProtKB-UniRule"/>
</dbReference>
<dbReference type="Gene3D" id="1.10.287.3980">
    <property type="match status" value="1"/>
</dbReference>
<dbReference type="HAMAP" id="MF_00391">
    <property type="entry name" value="Ribosomal_bL34"/>
    <property type="match status" value="1"/>
</dbReference>
<dbReference type="InterPro" id="IPR000271">
    <property type="entry name" value="Ribosomal_bL34"/>
</dbReference>
<dbReference type="InterPro" id="IPR020939">
    <property type="entry name" value="Ribosomal_bL34_CS"/>
</dbReference>
<dbReference type="NCBIfam" id="TIGR01030">
    <property type="entry name" value="rpmH_bact"/>
    <property type="match status" value="1"/>
</dbReference>
<dbReference type="Pfam" id="PF00468">
    <property type="entry name" value="Ribosomal_L34"/>
    <property type="match status" value="1"/>
</dbReference>
<dbReference type="PROSITE" id="PS00784">
    <property type="entry name" value="RIBOSOMAL_L34"/>
    <property type="match status" value="1"/>
</dbReference>
<comment type="similarity">
    <text evidence="1">Belongs to the bacterial ribosomal protein bL34 family.</text>
</comment>
<proteinExistence type="inferred from homology"/>
<name>RL34_PROM0</name>
<keyword id="KW-1185">Reference proteome</keyword>
<keyword id="KW-0687">Ribonucleoprotein</keyword>
<keyword id="KW-0689">Ribosomal protein</keyword>